<protein>
    <recommendedName>
        <fullName evidence="1">Leucine--tRNA ligase</fullName>
        <ecNumber evidence="1">6.1.1.4</ecNumber>
    </recommendedName>
    <alternativeName>
        <fullName evidence="1">Leucyl-tRNA synthetase</fullName>
        <shortName evidence="1">LeuRS</shortName>
    </alternativeName>
</protein>
<accession>A5VA89</accession>
<name>SYL_RHIWR</name>
<feature type="chain" id="PRO_0000334823" description="Leucine--tRNA ligase">
    <location>
        <begin position="1"/>
        <end position="835"/>
    </location>
</feature>
<feature type="short sequence motif" description="'HIGH' region">
    <location>
        <begin position="42"/>
        <end position="52"/>
    </location>
</feature>
<feature type="short sequence motif" description="'KMSKS' region">
    <location>
        <begin position="612"/>
        <end position="616"/>
    </location>
</feature>
<feature type="binding site" evidence="1">
    <location>
        <position position="615"/>
    </location>
    <ligand>
        <name>ATP</name>
        <dbReference type="ChEBI" id="CHEBI:30616"/>
    </ligand>
</feature>
<evidence type="ECO:0000255" key="1">
    <source>
        <dbReference type="HAMAP-Rule" id="MF_00049"/>
    </source>
</evidence>
<comment type="catalytic activity">
    <reaction evidence="1">
        <text>tRNA(Leu) + L-leucine + ATP = L-leucyl-tRNA(Leu) + AMP + diphosphate</text>
        <dbReference type="Rhea" id="RHEA:11688"/>
        <dbReference type="Rhea" id="RHEA-COMP:9613"/>
        <dbReference type="Rhea" id="RHEA-COMP:9622"/>
        <dbReference type="ChEBI" id="CHEBI:30616"/>
        <dbReference type="ChEBI" id="CHEBI:33019"/>
        <dbReference type="ChEBI" id="CHEBI:57427"/>
        <dbReference type="ChEBI" id="CHEBI:78442"/>
        <dbReference type="ChEBI" id="CHEBI:78494"/>
        <dbReference type="ChEBI" id="CHEBI:456215"/>
        <dbReference type="EC" id="6.1.1.4"/>
    </reaction>
</comment>
<comment type="subcellular location">
    <subcellularLocation>
        <location evidence="1">Cytoplasm</location>
    </subcellularLocation>
</comment>
<comment type="similarity">
    <text evidence="1">Belongs to the class-I aminoacyl-tRNA synthetase family.</text>
</comment>
<reference key="1">
    <citation type="journal article" date="2010" name="J. Bacteriol.">
        <title>Genome sequence of the dioxin-mineralizing bacterium Sphingomonas wittichii RW1.</title>
        <authorList>
            <person name="Miller T.R."/>
            <person name="Delcher A.L."/>
            <person name="Salzberg S.L."/>
            <person name="Saunders E."/>
            <person name="Detter J.C."/>
            <person name="Halden R.U."/>
        </authorList>
    </citation>
    <scope>NUCLEOTIDE SEQUENCE [LARGE SCALE GENOMIC DNA]</scope>
    <source>
        <strain>DSM 6014 / CCUG 31198 / JCM 15750 / NBRC 105917 / EY 4224 / RW1</strain>
    </source>
</reference>
<keyword id="KW-0030">Aminoacyl-tRNA synthetase</keyword>
<keyword id="KW-0067">ATP-binding</keyword>
<keyword id="KW-0963">Cytoplasm</keyword>
<keyword id="KW-0436">Ligase</keyword>
<keyword id="KW-0547">Nucleotide-binding</keyword>
<keyword id="KW-0648">Protein biosynthesis</keyword>
<keyword id="KW-1185">Reference proteome</keyword>
<organism>
    <name type="scientific">Rhizorhabdus wittichii (strain DSM 6014 / CCUG 31198 / JCM 15750 / NBRC 105917 / EY 4224 / RW1)</name>
    <name type="common">Sphingomonas wittichii</name>
    <dbReference type="NCBI Taxonomy" id="392499"/>
    <lineage>
        <taxon>Bacteria</taxon>
        <taxon>Pseudomonadati</taxon>
        <taxon>Pseudomonadota</taxon>
        <taxon>Alphaproteobacteria</taxon>
        <taxon>Sphingomonadales</taxon>
        <taxon>Sphingomonadaceae</taxon>
        <taxon>Rhizorhabdus</taxon>
    </lineage>
</organism>
<dbReference type="EC" id="6.1.1.4" evidence="1"/>
<dbReference type="EMBL" id="CP000699">
    <property type="protein sequence ID" value="ABQ69205.1"/>
    <property type="molecule type" value="Genomic_DNA"/>
</dbReference>
<dbReference type="SMR" id="A5VA89"/>
<dbReference type="STRING" id="392499.Swit_2852"/>
<dbReference type="PaxDb" id="392499-Swit_2852"/>
<dbReference type="KEGG" id="swi:Swit_2852"/>
<dbReference type="eggNOG" id="COG0495">
    <property type="taxonomic scope" value="Bacteria"/>
</dbReference>
<dbReference type="HOGENOM" id="CLU_004427_0_0_5"/>
<dbReference type="OrthoDB" id="9810365at2"/>
<dbReference type="Proteomes" id="UP000001989">
    <property type="component" value="Chromosome"/>
</dbReference>
<dbReference type="GO" id="GO:0005829">
    <property type="term" value="C:cytosol"/>
    <property type="evidence" value="ECO:0007669"/>
    <property type="project" value="TreeGrafter"/>
</dbReference>
<dbReference type="GO" id="GO:0002161">
    <property type="term" value="F:aminoacyl-tRNA deacylase activity"/>
    <property type="evidence" value="ECO:0007669"/>
    <property type="project" value="InterPro"/>
</dbReference>
<dbReference type="GO" id="GO:0005524">
    <property type="term" value="F:ATP binding"/>
    <property type="evidence" value="ECO:0007669"/>
    <property type="project" value="UniProtKB-UniRule"/>
</dbReference>
<dbReference type="GO" id="GO:0004823">
    <property type="term" value="F:leucine-tRNA ligase activity"/>
    <property type="evidence" value="ECO:0007669"/>
    <property type="project" value="UniProtKB-UniRule"/>
</dbReference>
<dbReference type="GO" id="GO:0006429">
    <property type="term" value="P:leucyl-tRNA aminoacylation"/>
    <property type="evidence" value="ECO:0007669"/>
    <property type="project" value="UniProtKB-UniRule"/>
</dbReference>
<dbReference type="CDD" id="cd07958">
    <property type="entry name" value="Anticodon_Ia_Leu_BEm"/>
    <property type="match status" value="1"/>
</dbReference>
<dbReference type="CDD" id="cd00812">
    <property type="entry name" value="LeuRS_core"/>
    <property type="match status" value="1"/>
</dbReference>
<dbReference type="FunFam" id="1.10.730.10:FF:000002">
    <property type="entry name" value="Leucine--tRNA ligase"/>
    <property type="match status" value="1"/>
</dbReference>
<dbReference type="FunFam" id="3.10.20.590:FF:000001">
    <property type="entry name" value="Leucine--tRNA ligase"/>
    <property type="match status" value="1"/>
</dbReference>
<dbReference type="Gene3D" id="2.20.28.290">
    <property type="match status" value="1"/>
</dbReference>
<dbReference type="Gene3D" id="3.10.20.590">
    <property type="match status" value="1"/>
</dbReference>
<dbReference type="Gene3D" id="3.40.50.620">
    <property type="entry name" value="HUPs"/>
    <property type="match status" value="2"/>
</dbReference>
<dbReference type="Gene3D" id="1.10.730.10">
    <property type="entry name" value="Isoleucyl-tRNA Synthetase, Domain 1"/>
    <property type="match status" value="1"/>
</dbReference>
<dbReference type="Gene3D" id="3.90.740.10">
    <property type="entry name" value="Valyl/Leucyl/Isoleucyl-tRNA synthetase, editing domain"/>
    <property type="match status" value="1"/>
</dbReference>
<dbReference type="HAMAP" id="MF_00049_B">
    <property type="entry name" value="Leu_tRNA_synth_B"/>
    <property type="match status" value="1"/>
</dbReference>
<dbReference type="InterPro" id="IPR001412">
    <property type="entry name" value="aa-tRNA-synth_I_CS"/>
</dbReference>
<dbReference type="InterPro" id="IPR002300">
    <property type="entry name" value="aa-tRNA-synth_Ia"/>
</dbReference>
<dbReference type="InterPro" id="IPR002302">
    <property type="entry name" value="Leu-tRNA-ligase"/>
</dbReference>
<dbReference type="InterPro" id="IPR025709">
    <property type="entry name" value="Leu_tRNA-synth_edit"/>
</dbReference>
<dbReference type="InterPro" id="IPR013155">
    <property type="entry name" value="M/V/L/I-tRNA-synth_anticd-bd"/>
</dbReference>
<dbReference type="InterPro" id="IPR015413">
    <property type="entry name" value="Methionyl/Leucyl_tRNA_Synth"/>
</dbReference>
<dbReference type="InterPro" id="IPR014729">
    <property type="entry name" value="Rossmann-like_a/b/a_fold"/>
</dbReference>
<dbReference type="InterPro" id="IPR009080">
    <property type="entry name" value="tRNAsynth_Ia_anticodon-bd"/>
</dbReference>
<dbReference type="InterPro" id="IPR009008">
    <property type="entry name" value="Val/Leu/Ile-tRNA-synth_edit"/>
</dbReference>
<dbReference type="NCBIfam" id="TIGR00396">
    <property type="entry name" value="leuS_bact"/>
    <property type="match status" value="1"/>
</dbReference>
<dbReference type="PANTHER" id="PTHR43740:SF2">
    <property type="entry name" value="LEUCINE--TRNA LIGASE, MITOCHONDRIAL"/>
    <property type="match status" value="1"/>
</dbReference>
<dbReference type="PANTHER" id="PTHR43740">
    <property type="entry name" value="LEUCYL-TRNA SYNTHETASE"/>
    <property type="match status" value="1"/>
</dbReference>
<dbReference type="Pfam" id="PF08264">
    <property type="entry name" value="Anticodon_1"/>
    <property type="match status" value="1"/>
</dbReference>
<dbReference type="Pfam" id="PF00133">
    <property type="entry name" value="tRNA-synt_1"/>
    <property type="match status" value="2"/>
</dbReference>
<dbReference type="Pfam" id="PF13603">
    <property type="entry name" value="tRNA-synt_1_2"/>
    <property type="match status" value="1"/>
</dbReference>
<dbReference type="Pfam" id="PF09334">
    <property type="entry name" value="tRNA-synt_1g"/>
    <property type="match status" value="1"/>
</dbReference>
<dbReference type="PRINTS" id="PR00985">
    <property type="entry name" value="TRNASYNTHLEU"/>
</dbReference>
<dbReference type="SUPFAM" id="SSF47323">
    <property type="entry name" value="Anticodon-binding domain of a subclass of class I aminoacyl-tRNA synthetases"/>
    <property type="match status" value="1"/>
</dbReference>
<dbReference type="SUPFAM" id="SSF52374">
    <property type="entry name" value="Nucleotidylyl transferase"/>
    <property type="match status" value="1"/>
</dbReference>
<dbReference type="SUPFAM" id="SSF50677">
    <property type="entry name" value="ValRS/IleRS/LeuRS editing domain"/>
    <property type="match status" value="1"/>
</dbReference>
<dbReference type="PROSITE" id="PS00178">
    <property type="entry name" value="AA_TRNA_LIGASE_I"/>
    <property type="match status" value="1"/>
</dbReference>
<gene>
    <name evidence="1" type="primary">leuS</name>
    <name type="ordered locus">Swit_2852</name>
</gene>
<proteinExistence type="inferred from homology"/>
<sequence>MSARFNHLKADAHWQGVWESQGTFQARDDSPKPKSYVLEMFPYPSGRIHMGHVRNYTMGDVLARYRRMKGFEVLHPMGWDAFGMPAENAAMEKKVHPGDWTRANIAAMRDQLKRIGFALDWSRELATCEPDYYGQEQALFLDLYAAGLVYRKESAVNWDPVDMTVLANEQVIDGRGWRSGALVERRKLNQWFLKITDFADDLLDGLDTLDQWPEKVRTMQENWIGKSQGMRFTFVLDAPAGDLTSFDVFTTRPDTMFGASFAAIAADHPIAQALSAGNPALQAFIADCKRTGTAAAEIETAEKKGYDTGLSVVHPLDPDWKLPLFVANFVLMDYGTGAVFGCPAHDQRDLDFARKYALPVKRVVAPSPEEAAAPIGDEAYVGPGRIVNSAFLDGLSVEEAKAAVIARAEAGGWGQGTTVWRLRDWGVSRQRYWGTPIPIIHCEGCGAVPVPHDQLPVVLPEDVAFDIPGNPLDRHPTWKHVDCPSCGKPARRETDTLDTFVDSSWYFIRFASQPSDKPFDRAVAESWMPVGQYIGGVEHAILHLLYARFWTRALERIGRIGVKEPFTGLFTQGMVTHETYKDPAGQWLSPEEVSDGIVVATGAPATVGRIEKMSKSKKNVVDPAPIVEQYGADAVRWFMLSDSPPERDLEWTESGIEGCWRFVNRLWRITDVSEAGDGEDRELDRKLHKAIAGIAADIEALGFNRAVAKIHELSNAIEKAAPSASRAAAARALVRLVAPMVPHLAEEAWARLGEQGLVADAAWPAHDPALLVDDEVTIAVQVNGKLRDTLTAPKGAPKDALERMALESEKITRLLEGAAPRKVIVVPDRLVNIVA</sequence>